<comment type="function">
    <text evidence="1">Catalyzes the oxidation of 5,10-methylenetetrahydrofolate to 5,10-methenyltetrahydrofolate and then the hydrolysis of 5,10-methenyltetrahydrofolate to 10-formyltetrahydrofolate.</text>
</comment>
<comment type="catalytic activity">
    <reaction evidence="1">
        <text>(6R)-5,10-methylene-5,6,7,8-tetrahydrofolate + NADP(+) = (6R)-5,10-methenyltetrahydrofolate + NADPH</text>
        <dbReference type="Rhea" id="RHEA:22812"/>
        <dbReference type="ChEBI" id="CHEBI:15636"/>
        <dbReference type="ChEBI" id="CHEBI:57455"/>
        <dbReference type="ChEBI" id="CHEBI:57783"/>
        <dbReference type="ChEBI" id="CHEBI:58349"/>
        <dbReference type="EC" id="1.5.1.5"/>
    </reaction>
</comment>
<comment type="catalytic activity">
    <reaction evidence="1">
        <text>(6R)-5,10-methenyltetrahydrofolate + H2O = (6R)-10-formyltetrahydrofolate + H(+)</text>
        <dbReference type="Rhea" id="RHEA:23700"/>
        <dbReference type="ChEBI" id="CHEBI:15377"/>
        <dbReference type="ChEBI" id="CHEBI:15378"/>
        <dbReference type="ChEBI" id="CHEBI:57455"/>
        <dbReference type="ChEBI" id="CHEBI:195366"/>
        <dbReference type="EC" id="3.5.4.9"/>
    </reaction>
</comment>
<comment type="pathway">
    <text evidence="1">One-carbon metabolism; tetrahydrofolate interconversion.</text>
</comment>
<comment type="subunit">
    <text evidence="1">Homodimer.</text>
</comment>
<comment type="similarity">
    <text evidence="1">Belongs to the tetrahydrofolate dehydrogenase/cyclohydrolase family.</text>
</comment>
<name>FOLD_MYCGA</name>
<dbReference type="EC" id="1.5.1.5" evidence="1"/>
<dbReference type="EC" id="3.5.4.9" evidence="1"/>
<dbReference type="EMBL" id="AE015450">
    <property type="protein sequence ID" value="AAP57064.2"/>
    <property type="molecule type" value="Genomic_DNA"/>
</dbReference>
<dbReference type="RefSeq" id="WP_011113977.1">
    <property type="nucleotide sequence ID" value="NC_004829.2"/>
</dbReference>
<dbReference type="SMR" id="Q7NAE4"/>
<dbReference type="KEGG" id="mga:MGA_0596"/>
<dbReference type="PATRIC" id="fig|233150.7.peg.804"/>
<dbReference type="HOGENOM" id="CLU_034045_2_0_14"/>
<dbReference type="OrthoDB" id="9803580at2"/>
<dbReference type="UniPathway" id="UPA00193"/>
<dbReference type="Proteomes" id="UP000001418">
    <property type="component" value="Chromosome"/>
</dbReference>
<dbReference type="GO" id="GO:0005829">
    <property type="term" value="C:cytosol"/>
    <property type="evidence" value="ECO:0007669"/>
    <property type="project" value="TreeGrafter"/>
</dbReference>
<dbReference type="GO" id="GO:0004477">
    <property type="term" value="F:methenyltetrahydrofolate cyclohydrolase activity"/>
    <property type="evidence" value="ECO:0007669"/>
    <property type="project" value="UniProtKB-UniRule"/>
</dbReference>
<dbReference type="GO" id="GO:0004488">
    <property type="term" value="F:methylenetetrahydrofolate dehydrogenase (NADP+) activity"/>
    <property type="evidence" value="ECO:0007669"/>
    <property type="project" value="UniProtKB-UniRule"/>
</dbReference>
<dbReference type="GO" id="GO:0000105">
    <property type="term" value="P:L-histidine biosynthetic process"/>
    <property type="evidence" value="ECO:0007669"/>
    <property type="project" value="UniProtKB-KW"/>
</dbReference>
<dbReference type="GO" id="GO:0009086">
    <property type="term" value="P:methionine biosynthetic process"/>
    <property type="evidence" value="ECO:0007669"/>
    <property type="project" value="UniProtKB-KW"/>
</dbReference>
<dbReference type="GO" id="GO:0006164">
    <property type="term" value="P:purine nucleotide biosynthetic process"/>
    <property type="evidence" value="ECO:0007669"/>
    <property type="project" value="UniProtKB-KW"/>
</dbReference>
<dbReference type="GO" id="GO:0035999">
    <property type="term" value="P:tetrahydrofolate interconversion"/>
    <property type="evidence" value="ECO:0007669"/>
    <property type="project" value="UniProtKB-UniRule"/>
</dbReference>
<dbReference type="CDD" id="cd01080">
    <property type="entry name" value="NAD_bind_m-THF_DH_Cyclohyd"/>
    <property type="match status" value="1"/>
</dbReference>
<dbReference type="Gene3D" id="3.40.50.10860">
    <property type="entry name" value="Leucine Dehydrogenase, chain A, domain 1"/>
    <property type="match status" value="1"/>
</dbReference>
<dbReference type="Gene3D" id="3.40.50.720">
    <property type="entry name" value="NAD(P)-binding Rossmann-like Domain"/>
    <property type="match status" value="1"/>
</dbReference>
<dbReference type="HAMAP" id="MF_01576">
    <property type="entry name" value="THF_DHG_CYH"/>
    <property type="match status" value="1"/>
</dbReference>
<dbReference type="InterPro" id="IPR046346">
    <property type="entry name" value="Aminoacid_DH-like_N_sf"/>
</dbReference>
<dbReference type="InterPro" id="IPR036291">
    <property type="entry name" value="NAD(P)-bd_dom_sf"/>
</dbReference>
<dbReference type="InterPro" id="IPR000672">
    <property type="entry name" value="THF_DH/CycHdrlase"/>
</dbReference>
<dbReference type="InterPro" id="IPR020630">
    <property type="entry name" value="THF_DH/CycHdrlase_cat_dom"/>
</dbReference>
<dbReference type="InterPro" id="IPR020631">
    <property type="entry name" value="THF_DH/CycHdrlase_NAD-bd_dom"/>
</dbReference>
<dbReference type="PANTHER" id="PTHR48099:SF5">
    <property type="entry name" value="C-1-TETRAHYDROFOLATE SYNTHASE, CYTOPLASMIC"/>
    <property type="match status" value="1"/>
</dbReference>
<dbReference type="PANTHER" id="PTHR48099">
    <property type="entry name" value="C-1-TETRAHYDROFOLATE SYNTHASE, CYTOPLASMIC-RELATED"/>
    <property type="match status" value="1"/>
</dbReference>
<dbReference type="Pfam" id="PF00763">
    <property type="entry name" value="THF_DHG_CYH"/>
    <property type="match status" value="1"/>
</dbReference>
<dbReference type="Pfam" id="PF02882">
    <property type="entry name" value="THF_DHG_CYH_C"/>
    <property type="match status" value="1"/>
</dbReference>
<dbReference type="PRINTS" id="PR00085">
    <property type="entry name" value="THFDHDRGNASE"/>
</dbReference>
<dbReference type="SUPFAM" id="SSF53223">
    <property type="entry name" value="Aminoacid dehydrogenase-like, N-terminal domain"/>
    <property type="match status" value="1"/>
</dbReference>
<dbReference type="SUPFAM" id="SSF51735">
    <property type="entry name" value="NAD(P)-binding Rossmann-fold domains"/>
    <property type="match status" value="1"/>
</dbReference>
<keyword id="KW-0028">Amino-acid biosynthesis</keyword>
<keyword id="KW-0368">Histidine biosynthesis</keyword>
<keyword id="KW-0378">Hydrolase</keyword>
<keyword id="KW-0486">Methionine biosynthesis</keyword>
<keyword id="KW-0511">Multifunctional enzyme</keyword>
<keyword id="KW-0521">NADP</keyword>
<keyword id="KW-0554">One-carbon metabolism</keyword>
<keyword id="KW-0560">Oxidoreductase</keyword>
<keyword id="KW-0658">Purine biosynthesis</keyword>
<keyword id="KW-1185">Reference proteome</keyword>
<proteinExistence type="inferred from homology"/>
<protein>
    <recommendedName>
        <fullName evidence="1">Bifunctional protein FolD</fullName>
    </recommendedName>
    <domain>
        <recommendedName>
            <fullName evidence="1">Methylenetetrahydrofolate dehydrogenase</fullName>
            <ecNumber evidence="1">1.5.1.5</ecNumber>
        </recommendedName>
    </domain>
    <domain>
        <recommendedName>
            <fullName evidence="1">Methenyltetrahydrofolate cyclohydrolase</fullName>
            <ecNumber evidence="1">3.5.4.9</ecNumber>
        </recommendedName>
    </domain>
</protein>
<accession>Q7NAE4</accession>
<reference key="1">
    <citation type="journal article" date="2003" name="Microbiology">
        <title>The complete genome sequence of the avian pathogen Mycoplasma gallisepticum strain R(low).</title>
        <authorList>
            <person name="Papazisi L."/>
            <person name="Gorton T.S."/>
            <person name="Kutish G."/>
            <person name="Markham P.F."/>
            <person name="Browning G.F."/>
            <person name="Nguyen D.K."/>
            <person name="Swartzell S."/>
            <person name="Madan A."/>
            <person name="Mahairas G."/>
            <person name="Geary S.J."/>
        </authorList>
    </citation>
    <scope>NUCLEOTIDE SEQUENCE [LARGE SCALE GENOMIC DNA]</scope>
    <source>
        <strain>R(low / passage 15 / clone 2)</strain>
    </source>
</reference>
<evidence type="ECO:0000255" key="1">
    <source>
        <dbReference type="HAMAP-Rule" id="MF_01576"/>
    </source>
</evidence>
<gene>
    <name evidence="1" type="primary">folD</name>
    <name type="ordered locus">MYCGA7140</name>
    <name type="ORF">MGA_0596</name>
</gene>
<organism>
    <name type="scientific">Mycoplasmoides gallisepticum (strain R(low / passage 15 / clone 2))</name>
    <name type="common">Mycoplasma gallisepticum</name>
    <dbReference type="NCBI Taxonomy" id="710127"/>
    <lineage>
        <taxon>Bacteria</taxon>
        <taxon>Bacillati</taxon>
        <taxon>Mycoplasmatota</taxon>
        <taxon>Mycoplasmoidales</taxon>
        <taxon>Mycoplasmoidaceae</taxon>
        <taxon>Mycoplasmoides</taxon>
    </lineage>
</organism>
<sequence>MFIKLDGTKLSQKLKEDLAKKVNNQKIKILIIISDPSEASRIYVRNKINYCDSLGIQTEVYDLSKIDDTNQFIVEMNQKISLSNPNGVLVQLPIKERLDTNKIIENIPIRLDVDAFLYHRFDQDQKEKVIPCVLNAVLELFKEYQLSFLDKKILLIGNGITSNQPIVNYLNEHQIKFDLITKENSQLLEEKTKVADLVISAVGKAKFLANYQFKRGVIFIDIGIDKYFDPEQSKYLICGDFDYDKLKEIASYGTPTPGGIGPLTIYSLVKNLINLSEIQKVNK</sequence>
<feature type="chain" id="PRO_0000268406" description="Bifunctional protein FolD">
    <location>
        <begin position="1"/>
        <end position="283"/>
    </location>
</feature>
<feature type="binding site" evidence="1">
    <location>
        <begin position="157"/>
        <end position="159"/>
    </location>
    <ligand>
        <name>NADP(+)</name>
        <dbReference type="ChEBI" id="CHEBI:58349"/>
    </ligand>
</feature>
<feature type="binding site" evidence="1">
    <location>
        <position position="224"/>
    </location>
    <ligand>
        <name>NADP(+)</name>
        <dbReference type="ChEBI" id="CHEBI:58349"/>
    </ligand>
</feature>